<sequence>MSPQTETKASVGFKAGVKDYKLTYYTPDYETKDTDILAAFRVTPQPGVPPEEAGAAVAAESSTGTWTTVWTDGLTSLDRYKGRCYHIEPVAGEQTQFIAYVAYPLDLFEEGSVTNLFTSIVGNVFGLKALRALRLEGLRIPPAYSKTFQGPPHGIQVERDKLNKYGRPLLGCTIKPKLGLSAKNYGRAVYECLRGGLDFTKDDENVNSQPFMRWRDRFVFCAEAIYKAQAETGEIKGHYLNATAGTCEEMMKRAVFARELGVPIVMHDYLTGGFTANTSLAHYCRDNGLLLHIHRAMHAVIDRQKNHGMHFRVLAKALRMSGGDHIHAGTVVGKLEGERDITLGFVDLLRDDFIEKDRSRGIYFTQDWVSLPGVLPVASGGIHVWHMPALTEIFGDDSVLQFGGGTLGHPWGNAPGAVANRVALEACVQARNEGRDLAREGNEIIREASKWSPELAAACEVWKAIKFEFAAVDTL</sequence>
<organism>
    <name type="scientific">Viscum album</name>
    <name type="common">European mistletoe</name>
    <dbReference type="NCBI Taxonomy" id="3972"/>
    <lineage>
        <taxon>Eukaryota</taxon>
        <taxon>Viridiplantae</taxon>
        <taxon>Streptophyta</taxon>
        <taxon>Embryophyta</taxon>
        <taxon>Tracheophyta</taxon>
        <taxon>Spermatophyta</taxon>
        <taxon>Magnoliopsida</taxon>
        <taxon>eudicotyledons</taxon>
        <taxon>Gunneridae</taxon>
        <taxon>Pentapetalae</taxon>
        <taxon>Santalales</taxon>
        <taxon>Viscaceae</taxon>
        <taxon>Viscum</taxon>
    </lineage>
</organism>
<comment type="function">
    <text evidence="1">RuBisCO catalyzes two reactions: the carboxylation of D-ribulose 1,5-bisphosphate, the primary event in carbon dioxide fixation, as well as the oxidative fragmentation of the pentose substrate in the photorespiration process. Both reactions occur simultaneously and in competition at the same active site.</text>
</comment>
<comment type="catalytic activity">
    <reaction evidence="1">
        <text>2 (2R)-3-phosphoglycerate + 2 H(+) = D-ribulose 1,5-bisphosphate + CO2 + H2O</text>
        <dbReference type="Rhea" id="RHEA:23124"/>
        <dbReference type="ChEBI" id="CHEBI:15377"/>
        <dbReference type="ChEBI" id="CHEBI:15378"/>
        <dbReference type="ChEBI" id="CHEBI:16526"/>
        <dbReference type="ChEBI" id="CHEBI:57870"/>
        <dbReference type="ChEBI" id="CHEBI:58272"/>
        <dbReference type="EC" id="4.1.1.39"/>
    </reaction>
</comment>
<comment type="catalytic activity">
    <reaction evidence="1">
        <text>D-ribulose 1,5-bisphosphate + O2 = 2-phosphoglycolate + (2R)-3-phosphoglycerate + 2 H(+)</text>
        <dbReference type="Rhea" id="RHEA:36631"/>
        <dbReference type="ChEBI" id="CHEBI:15378"/>
        <dbReference type="ChEBI" id="CHEBI:15379"/>
        <dbReference type="ChEBI" id="CHEBI:57870"/>
        <dbReference type="ChEBI" id="CHEBI:58033"/>
        <dbReference type="ChEBI" id="CHEBI:58272"/>
    </reaction>
</comment>
<comment type="cofactor">
    <cofactor evidence="1">
        <name>Mg(2+)</name>
        <dbReference type="ChEBI" id="CHEBI:18420"/>
    </cofactor>
    <text evidence="1">Binds 1 Mg(2+) ion per subunit.</text>
</comment>
<comment type="subunit">
    <text evidence="1">Heterohexadecamer of 8 large chains and 8 small chains; disulfide-linked. The disulfide link is formed within the large subunit homodimers.</text>
</comment>
<comment type="subcellular location">
    <subcellularLocation>
        <location>Plastid</location>
        <location>Chloroplast</location>
    </subcellularLocation>
</comment>
<comment type="PTM">
    <text evidence="1">The disulfide bond which can form in the large chain dimeric partners within the hexadecamer appears to be associated with oxidative stress and protein turnover.</text>
</comment>
<comment type="miscellaneous">
    <text evidence="1">The basic functional RuBisCO is composed of a large chain homodimer in a 'head-to-tail' conformation. In form I RuBisCO this homodimer is arranged in a barrel-like tetramer with the small subunits forming a tetrameric 'cap' on each end of the 'barrel'.</text>
</comment>
<comment type="similarity">
    <text evidence="1">Belongs to the RuBisCO large chain family. Type I subfamily.</text>
</comment>
<geneLocation type="chloroplast"/>
<evidence type="ECO:0000255" key="1">
    <source>
        <dbReference type="HAMAP-Rule" id="MF_01338"/>
    </source>
</evidence>
<feature type="propeptide" id="PRO_0000031441" evidence="1">
    <location>
        <begin position="1"/>
        <end position="2"/>
    </location>
</feature>
<feature type="chain" id="PRO_0000031442" description="Ribulose bisphosphate carboxylase large chain">
    <location>
        <begin position="3"/>
        <end position="475"/>
    </location>
</feature>
<feature type="active site" description="Proton acceptor" evidence="1">
    <location>
        <position position="175"/>
    </location>
</feature>
<feature type="active site" description="Proton acceptor" evidence="1">
    <location>
        <position position="294"/>
    </location>
</feature>
<feature type="binding site" description="in homodimeric partner" evidence="1">
    <location>
        <position position="123"/>
    </location>
    <ligand>
        <name>substrate</name>
    </ligand>
</feature>
<feature type="binding site" evidence="1">
    <location>
        <position position="173"/>
    </location>
    <ligand>
        <name>substrate</name>
    </ligand>
</feature>
<feature type="binding site" evidence="1">
    <location>
        <position position="177"/>
    </location>
    <ligand>
        <name>substrate</name>
    </ligand>
</feature>
<feature type="binding site" description="via carbamate group" evidence="1">
    <location>
        <position position="201"/>
    </location>
    <ligand>
        <name>Mg(2+)</name>
        <dbReference type="ChEBI" id="CHEBI:18420"/>
    </ligand>
</feature>
<feature type="binding site" evidence="1">
    <location>
        <position position="203"/>
    </location>
    <ligand>
        <name>Mg(2+)</name>
        <dbReference type="ChEBI" id="CHEBI:18420"/>
    </ligand>
</feature>
<feature type="binding site" evidence="1">
    <location>
        <position position="204"/>
    </location>
    <ligand>
        <name>Mg(2+)</name>
        <dbReference type="ChEBI" id="CHEBI:18420"/>
    </ligand>
</feature>
<feature type="binding site" evidence="1">
    <location>
        <position position="295"/>
    </location>
    <ligand>
        <name>substrate</name>
    </ligand>
</feature>
<feature type="binding site" evidence="1">
    <location>
        <position position="327"/>
    </location>
    <ligand>
        <name>substrate</name>
    </ligand>
</feature>
<feature type="binding site" evidence="1">
    <location>
        <position position="379"/>
    </location>
    <ligand>
        <name>substrate</name>
    </ligand>
</feature>
<feature type="site" description="Transition state stabilizer" evidence="1">
    <location>
        <position position="334"/>
    </location>
</feature>
<feature type="modified residue" description="N-acetylproline" evidence="1">
    <location>
        <position position="3"/>
    </location>
</feature>
<feature type="modified residue" description="N6,N6,N6-trimethyllysine" evidence="1">
    <location>
        <position position="14"/>
    </location>
</feature>
<feature type="modified residue" description="N6-carboxylysine" evidence="1">
    <location>
        <position position="201"/>
    </location>
</feature>
<feature type="disulfide bond" description="Interchain; in linked form" evidence="1">
    <location>
        <position position="247"/>
    </location>
</feature>
<keyword id="KW-0007">Acetylation</keyword>
<keyword id="KW-0113">Calvin cycle</keyword>
<keyword id="KW-0120">Carbon dioxide fixation</keyword>
<keyword id="KW-0150">Chloroplast</keyword>
<keyword id="KW-1015">Disulfide bond</keyword>
<keyword id="KW-0456">Lyase</keyword>
<keyword id="KW-0460">Magnesium</keyword>
<keyword id="KW-0479">Metal-binding</keyword>
<keyword id="KW-0488">Methylation</keyword>
<keyword id="KW-0503">Monooxygenase</keyword>
<keyword id="KW-0560">Oxidoreductase</keyword>
<keyword id="KW-0601">Photorespiration</keyword>
<keyword id="KW-0602">Photosynthesis</keyword>
<keyword id="KW-0934">Plastid</keyword>
<protein>
    <recommendedName>
        <fullName evidence="1">Ribulose bisphosphate carboxylase large chain</fullName>
        <shortName evidence="1">RuBisCO large subunit</shortName>
        <ecNumber evidence="1">4.1.1.39</ecNumber>
    </recommendedName>
</protein>
<accession>P48718</accession>
<name>RBL_VISAL</name>
<gene>
    <name evidence="1" type="primary">rbcL</name>
</gene>
<reference key="1">
    <citation type="journal article" date="1995" name="Ann. Mo. Bot. Gard.">
        <title>A comparision of angiosperm phylogenies from nuclear 18S rRNA and rbcL sequences.</title>
        <authorList>
            <person name="Nickrent D.L."/>
            <person name="Soltis D.E."/>
        </authorList>
    </citation>
    <scope>NUCLEOTIDE SEQUENCE [GENOMIC DNA]</scope>
</reference>
<proteinExistence type="inferred from homology"/>
<dbReference type="EC" id="4.1.1.39" evidence="1"/>
<dbReference type="EMBL" id="L26078">
    <property type="protein sequence ID" value="AAB97301.1"/>
    <property type="molecule type" value="Genomic_DNA"/>
</dbReference>
<dbReference type="SMR" id="P48718"/>
<dbReference type="GO" id="GO:0009507">
    <property type="term" value="C:chloroplast"/>
    <property type="evidence" value="ECO:0007669"/>
    <property type="project" value="UniProtKB-SubCell"/>
</dbReference>
<dbReference type="GO" id="GO:0000287">
    <property type="term" value="F:magnesium ion binding"/>
    <property type="evidence" value="ECO:0007669"/>
    <property type="project" value="UniProtKB-UniRule"/>
</dbReference>
<dbReference type="GO" id="GO:0004497">
    <property type="term" value="F:monooxygenase activity"/>
    <property type="evidence" value="ECO:0007669"/>
    <property type="project" value="UniProtKB-KW"/>
</dbReference>
<dbReference type="GO" id="GO:0016984">
    <property type="term" value="F:ribulose-bisphosphate carboxylase activity"/>
    <property type="evidence" value="ECO:0007669"/>
    <property type="project" value="UniProtKB-UniRule"/>
</dbReference>
<dbReference type="GO" id="GO:0009853">
    <property type="term" value="P:photorespiration"/>
    <property type="evidence" value="ECO:0007669"/>
    <property type="project" value="UniProtKB-KW"/>
</dbReference>
<dbReference type="GO" id="GO:0019253">
    <property type="term" value="P:reductive pentose-phosphate cycle"/>
    <property type="evidence" value="ECO:0007669"/>
    <property type="project" value="UniProtKB-UniRule"/>
</dbReference>
<dbReference type="CDD" id="cd08212">
    <property type="entry name" value="RuBisCO_large_I"/>
    <property type="match status" value="1"/>
</dbReference>
<dbReference type="FunFam" id="3.20.20.110:FF:000001">
    <property type="entry name" value="Ribulose bisphosphate carboxylase large chain"/>
    <property type="match status" value="1"/>
</dbReference>
<dbReference type="FunFam" id="3.30.70.150:FF:000001">
    <property type="entry name" value="Ribulose bisphosphate carboxylase large chain"/>
    <property type="match status" value="1"/>
</dbReference>
<dbReference type="Gene3D" id="3.20.20.110">
    <property type="entry name" value="Ribulose bisphosphate carboxylase, large subunit, C-terminal domain"/>
    <property type="match status" value="1"/>
</dbReference>
<dbReference type="Gene3D" id="3.30.70.150">
    <property type="entry name" value="RuBisCO large subunit, N-terminal domain"/>
    <property type="match status" value="1"/>
</dbReference>
<dbReference type="HAMAP" id="MF_01338">
    <property type="entry name" value="RuBisCO_L_type1"/>
    <property type="match status" value="1"/>
</dbReference>
<dbReference type="InterPro" id="IPR033966">
    <property type="entry name" value="RuBisCO"/>
</dbReference>
<dbReference type="InterPro" id="IPR020878">
    <property type="entry name" value="RuBisCo_large_chain_AS"/>
</dbReference>
<dbReference type="InterPro" id="IPR000685">
    <property type="entry name" value="RuBisCO_lsu_C"/>
</dbReference>
<dbReference type="InterPro" id="IPR036376">
    <property type="entry name" value="RuBisCO_lsu_C_sf"/>
</dbReference>
<dbReference type="InterPro" id="IPR017443">
    <property type="entry name" value="RuBisCO_lsu_fd_N"/>
</dbReference>
<dbReference type="InterPro" id="IPR036422">
    <property type="entry name" value="RuBisCO_lsu_N_sf"/>
</dbReference>
<dbReference type="InterPro" id="IPR020888">
    <property type="entry name" value="RuBisCO_lsuI"/>
</dbReference>
<dbReference type="NCBIfam" id="NF003252">
    <property type="entry name" value="PRK04208.1"/>
    <property type="match status" value="1"/>
</dbReference>
<dbReference type="PANTHER" id="PTHR42704">
    <property type="entry name" value="RIBULOSE BISPHOSPHATE CARBOXYLASE"/>
    <property type="match status" value="1"/>
</dbReference>
<dbReference type="PANTHER" id="PTHR42704:SF15">
    <property type="entry name" value="RIBULOSE BISPHOSPHATE CARBOXYLASE LARGE CHAIN"/>
    <property type="match status" value="1"/>
</dbReference>
<dbReference type="Pfam" id="PF00016">
    <property type="entry name" value="RuBisCO_large"/>
    <property type="match status" value="1"/>
</dbReference>
<dbReference type="Pfam" id="PF02788">
    <property type="entry name" value="RuBisCO_large_N"/>
    <property type="match status" value="1"/>
</dbReference>
<dbReference type="SFLD" id="SFLDG01052">
    <property type="entry name" value="RuBisCO"/>
    <property type="match status" value="1"/>
</dbReference>
<dbReference type="SFLD" id="SFLDS00014">
    <property type="entry name" value="RuBisCO"/>
    <property type="match status" value="1"/>
</dbReference>
<dbReference type="SFLD" id="SFLDG00301">
    <property type="entry name" value="RuBisCO-like_proteins"/>
    <property type="match status" value="1"/>
</dbReference>
<dbReference type="SUPFAM" id="SSF51649">
    <property type="entry name" value="RuBisCo, C-terminal domain"/>
    <property type="match status" value="1"/>
</dbReference>
<dbReference type="SUPFAM" id="SSF54966">
    <property type="entry name" value="RuBisCO, large subunit, small (N-terminal) domain"/>
    <property type="match status" value="1"/>
</dbReference>
<dbReference type="PROSITE" id="PS00157">
    <property type="entry name" value="RUBISCO_LARGE"/>
    <property type="match status" value="1"/>
</dbReference>